<evidence type="ECO:0000255" key="1">
    <source>
        <dbReference type="HAMAP-Rule" id="MF_00336"/>
    </source>
</evidence>
<sequence length="242" mass="26307">MSGFFITATDTEVGKTVVAGALAGVFRELGYNIGVYKPLQSGHVASNPEGDAARLKVLSGVPTKEDEICPYSIEEPLAPRLAMKRAGRAVTLKDIIHHYNERLKEFNSLFVEGAGGLAVPYTEDALVIDFAKELQLPLIVVARPTLGTVNHTVLTIAYAKAHGLTVAGVILSGCKECEMERVQENKVMIEELSGVPVLGLLPFFEGEFTKKEVLESAKEYIMISKLEEFIRNESTVAHTSSN</sequence>
<gene>
    <name evidence="1" type="primary">bioD</name>
    <name type="ordered locus">BCA_4231</name>
</gene>
<proteinExistence type="inferred from homology"/>
<reference key="1">
    <citation type="submission" date="2009-02" db="EMBL/GenBank/DDBJ databases">
        <title>Genome sequence of Bacillus cereus 03BB102.</title>
        <authorList>
            <person name="Dodson R.J."/>
            <person name="Jackson P."/>
            <person name="Munk A.C."/>
            <person name="Brettin T."/>
            <person name="Bruce D."/>
            <person name="Detter C."/>
            <person name="Tapia R."/>
            <person name="Han C."/>
            <person name="Sutton G."/>
            <person name="Sims D."/>
        </authorList>
    </citation>
    <scope>NUCLEOTIDE SEQUENCE [LARGE SCALE GENOMIC DNA]</scope>
    <source>
        <strain>03BB102</strain>
    </source>
</reference>
<feature type="chain" id="PRO_1000133202" description="ATP-dependent dethiobiotin synthetase BioD">
    <location>
        <begin position="1"/>
        <end position="242"/>
    </location>
</feature>
<feature type="active site" evidence="1">
    <location>
        <position position="37"/>
    </location>
</feature>
<feature type="binding site" evidence="1">
    <location>
        <begin position="12"/>
        <end position="17"/>
    </location>
    <ligand>
        <name>ATP</name>
        <dbReference type="ChEBI" id="CHEBI:30616"/>
    </ligand>
</feature>
<feature type="binding site" evidence="1">
    <location>
        <position position="16"/>
    </location>
    <ligand>
        <name>Mg(2+)</name>
        <dbReference type="ChEBI" id="CHEBI:18420"/>
    </ligand>
</feature>
<feature type="binding site" evidence="1">
    <location>
        <position position="41"/>
    </location>
    <ligand>
        <name>substrate</name>
    </ligand>
</feature>
<feature type="binding site" evidence="1">
    <location>
        <position position="51"/>
    </location>
    <ligand>
        <name>ATP</name>
        <dbReference type="ChEBI" id="CHEBI:30616"/>
    </ligand>
</feature>
<feature type="binding site" evidence="1">
    <location>
        <position position="51"/>
    </location>
    <ligand>
        <name>Mg(2+)</name>
        <dbReference type="ChEBI" id="CHEBI:18420"/>
    </ligand>
</feature>
<feature type="binding site" evidence="1">
    <location>
        <begin position="112"/>
        <end position="115"/>
    </location>
    <ligand>
        <name>ATP</name>
        <dbReference type="ChEBI" id="CHEBI:30616"/>
    </ligand>
</feature>
<feature type="binding site" evidence="1">
    <location>
        <position position="112"/>
    </location>
    <ligand>
        <name>Mg(2+)</name>
        <dbReference type="ChEBI" id="CHEBI:18420"/>
    </ligand>
</feature>
<organism>
    <name type="scientific">Bacillus cereus (strain 03BB102)</name>
    <dbReference type="NCBI Taxonomy" id="572264"/>
    <lineage>
        <taxon>Bacteria</taxon>
        <taxon>Bacillati</taxon>
        <taxon>Bacillota</taxon>
        <taxon>Bacilli</taxon>
        <taxon>Bacillales</taxon>
        <taxon>Bacillaceae</taxon>
        <taxon>Bacillus</taxon>
        <taxon>Bacillus cereus group</taxon>
    </lineage>
</organism>
<name>BIOD_BACC3</name>
<dbReference type="EC" id="6.3.3.3" evidence="1"/>
<dbReference type="EMBL" id="CP001407">
    <property type="protein sequence ID" value="ACO27331.1"/>
    <property type="molecule type" value="Genomic_DNA"/>
</dbReference>
<dbReference type="RefSeq" id="WP_000012500.1">
    <property type="nucleotide sequence ID" value="NZ_CP009318.1"/>
</dbReference>
<dbReference type="SMR" id="C1EQZ2"/>
<dbReference type="KEGG" id="bcx:BCA_4231"/>
<dbReference type="PATRIC" id="fig|572264.18.peg.4182"/>
<dbReference type="UniPathway" id="UPA00078">
    <property type="reaction ID" value="UER00161"/>
</dbReference>
<dbReference type="Proteomes" id="UP000002210">
    <property type="component" value="Chromosome"/>
</dbReference>
<dbReference type="GO" id="GO:0005829">
    <property type="term" value="C:cytosol"/>
    <property type="evidence" value="ECO:0007669"/>
    <property type="project" value="TreeGrafter"/>
</dbReference>
<dbReference type="GO" id="GO:0005524">
    <property type="term" value="F:ATP binding"/>
    <property type="evidence" value="ECO:0007669"/>
    <property type="project" value="UniProtKB-UniRule"/>
</dbReference>
<dbReference type="GO" id="GO:0004141">
    <property type="term" value="F:dethiobiotin synthase activity"/>
    <property type="evidence" value="ECO:0007669"/>
    <property type="project" value="UniProtKB-UniRule"/>
</dbReference>
<dbReference type="GO" id="GO:0000287">
    <property type="term" value="F:magnesium ion binding"/>
    <property type="evidence" value="ECO:0007669"/>
    <property type="project" value="UniProtKB-UniRule"/>
</dbReference>
<dbReference type="GO" id="GO:0009102">
    <property type="term" value="P:biotin biosynthetic process"/>
    <property type="evidence" value="ECO:0007669"/>
    <property type="project" value="UniProtKB-UniRule"/>
</dbReference>
<dbReference type="CDD" id="cd03109">
    <property type="entry name" value="DTBS"/>
    <property type="match status" value="1"/>
</dbReference>
<dbReference type="FunFam" id="3.40.50.300:FF:001212">
    <property type="entry name" value="ATP-dependent dethiobiotin synthetase BioD"/>
    <property type="match status" value="1"/>
</dbReference>
<dbReference type="Gene3D" id="3.40.50.300">
    <property type="entry name" value="P-loop containing nucleotide triphosphate hydrolases"/>
    <property type="match status" value="1"/>
</dbReference>
<dbReference type="HAMAP" id="MF_00336">
    <property type="entry name" value="BioD"/>
    <property type="match status" value="1"/>
</dbReference>
<dbReference type="InterPro" id="IPR004472">
    <property type="entry name" value="DTB_synth_BioD"/>
</dbReference>
<dbReference type="InterPro" id="IPR027417">
    <property type="entry name" value="P-loop_NTPase"/>
</dbReference>
<dbReference type="NCBIfam" id="TIGR00347">
    <property type="entry name" value="bioD"/>
    <property type="match status" value="1"/>
</dbReference>
<dbReference type="PANTHER" id="PTHR43210:SF2">
    <property type="entry name" value="ATP-DEPENDENT DETHIOBIOTIN SYNTHETASE BIOD 2"/>
    <property type="match status" value="1"/>
</dbReference>
<dbReference type="PANTHER" id="PTHR43210">
    <property type="entry name" value="DETHIOBIOTIN SYNTHETASE"/>
    <property type="match status" value="1"/>
</dbReference>
<dbReference type="Pfam" id="PF13500">
    <property type="entry name" value="AAA_26"/>
    <property type="match status" value="1"/>
</dbReference>
<dbReference type="PIRSF" id="PIRSF006755">
    <property type="entry name" value="DTB_synth"/>
    <property type="match status" value="1"/>
</dbReference>
<dbReference type="SUPFAM" id="SSF52540">
    <property type="entry name" value="P-loop containing nucleoside triphosphate hydrolases"/>
    <property type="match status" value="1"/>
</dbReference>
<keyword id="KW-0067">ATP-binding</keyword>
<keyword id="KW-0093">Biotin biosynthesis</keyword>
<keyword id="KW-0963">Cytoplasm</keyword>
<keyword id="KW-0436">Ligase</keyword>
<keyword id="KW-0460">Magnesium</keyword>
<keyword id="KW-0479">Metal-binding</keyword>
<keyword id="KW-0547">Nucleotide-binding</keyword>
<protein>
    <recommendedName>
        <fullName evidence="1">ATP-dependent dethiobiotin synthetase BioD</fullName>
        <ecNumber evidence="1">6.3.3.3</ecNumber>
    </recommendedName>
    <alternativeName>
        <fullName evidence="1">DTB synthetase</fullName>
        <shortName evidence="1">DTBS</shortName>
    </alternativeName>
    <alternativeName>
        <fullName evidence="1">Dethiobiotin synthase</fullName>
    </alternativeName>
</protein>
<accession>C1EQZ2</accession>
<comment type="function">
    <text evidence="1">Catalyzes a mechanistically unusual reaction, the ATP-dependent insertion of CO2 between the N7 and N8 nitrogen atoms of 7,8-diaminopelargonic acid (DAPA, also called 7,8-diammoniononanoate) to form a ureido ring.</text>
</comment>
<comment type="catalytic activity">
    <reaction evidence="1">
        <text>(7R,8S)-7,8-diammoniononanoate + CO2 + ATP = (4R,5S)-dethiobiotin + ADP + phosphate + 3 H(+)</text>
        <dbReference type="Rhea" id="RHEA:15805"/>
        <dbReference type="ChEBI" id="CHEBI:15378"/>
        <dbReference type="ChEBI" id="CHEBI:16526"/>
        <dbReference type="ChEBI" id="CHEBI:30616"/>
        <dbReference type="ChEBI" id="CHEBI:43474"/>
        <dbReference type="ChEBI" id="CHEBI:149469"/>
        <dbReference type="ChEBI" id="CHEBI:149473"/>
        <dbReference type="ChEBI" id="CHEBI:456216"/>
        <dbReference type="EC" id="6.3.3.3"/>
    </reaction>
</comment>
<comment type="cofactor">
    <cofactor evidence="1">
        <name>Mg(2+)</name>
        <dbReference type="ChEBI" id="CHEBI:18420"/>
    </cofactor>
</comment>
<comment type="pathway">
    <text evidence="1">Cofactor biosynthesis; biotin biosynthesis; biotin from 7,8-diaminononanoate: step 1/2.</text>
</comment>
<comment type="subunit">
    <text evidence="1">Homodimer.</text>
</comment>
<comment type="subcellular location">
    <subcellularLocation>
        <location evidence="1">Cytoplasm</location>
    </subcellularLocation>
</comment>
<comment type="similarity">
    <text evidence="1">Belongs to the dethiobiotin synthetase family.</text>
</comment>